<keyword id="KW-0413">Isomerase</keyword>
<keyword id="KW-0663">Pyridoxal phosphate</keyword>
<gene>
    <name evidence="4" type="primary">TOXG</name>
</gene>
<name>TOXG_COCCA</name>
<proteinExistence type="evidence at protein level"/>
<protein>
    <recommendedName>
        <fullName evidence="4">Alanine racemase TOXG</fullName>
        <ecNumber evidence="2">5.1.1.1</ecNumber>
    </recommendedName>
    <alternativeName>
        <fullName evidence="4">TOX2 HC-toxin biosynthesis cluster protein TOXG</fullName>
    </alternativeName>
</protein>
<comment type="function">
    <text evidence="2">Alanine racemase, part of the diffuse TOX2 gene cluster that mediates the biosynthesis of the HC-toxin, cyclic tetrapeptide of structure cyclo(D-Pro-L-Ala-D-Ala-L-Aeo), where Aeo stands for 2-amino-9,10-epoxi-8-oxodecanoic acid (PubMed:10671527). HC-toxin is a determinant of specificity and virulence in the interaction between the producing fungus and its host, maize (PubMed:10671527). TOXG catalyzes the conversion of L-alanine into D-alanine, an essential precursor for the production of the major forms of HC-toxin by the non-ribosomal peptide synthetase HTS1 (PubMed:10671527).</text>
</comment>
<comment type="catalytic activity">
    <reaction evidence="2">
        <text>L-alanine = D-alanine</text>
        <dbReference type="Rhea" id="RHEA:20249"/>
        <dbReference type="ChEBI" id="CHEBI:57416"/>
        <dbReference type="ChEBI" id="CHEBI:57972"/>
        <dbReference type="EC" id="5.1.1.1"/>
    </reaction>
    <physiologicalReaction direction="left-to-right" evidence="2">
        <dbReference type="Rhea" id="RHEA:20250"/>
    </physiologicalReaction>
</comment>
<comment type="cofactor">
    <cofactor evidence="1">
        <name>pyridoxal 5'-phosphate</name>
        <dbReference type="ChEBI" id="CHEBI:597326"/>
    </cofactor>
</comment>
<comment type="pathway">
    <text evidence="2">Mycotoxin biosynthesis; HC-toxin biosynthesis.</text>
</comment>
<comment type="disruption phenotype">
    <text evidence="2">Reduces pathogenicity of the fungus on maize.</text>
</comment>
<comment type="miscellaneous">
    <text evidence="3">The genes involved in HC-toxin biosynthesis, called collectively TOX2, are organized into a diffuse cluster that spans &gt;500 kb. All of the known genes are duplicated or triplicated within this region, with some variation in copy number and chromosomal location among different race 1 strains.</text>
</comment>
<comment type="similarity">
    <text evidence="5">Belongs to the threonine aldolase family.</text>
</comment>
<evidence type="ECO:0000250" key="1">
    <source>
        <dbReference type="UniProtKB" id="O07051"/>
    </source>
</evidence>
<evidence type="ECO:0000269" key="2">
    <source>
    </source>
</evidence>
<evidence type="ECO:0000269" key="3">
    <source>
    </source>
</evidence>
<evidence type="ECO:0000303" key="4">
    <source>
    </source>
</evidence>
<evidence type="ECO:0000305" key="5"/>
<feature type="chain" id="PRO_0000121573" description="Alanine racemase TOXG">
    <location>
        <begin position="1"/>
        <end position="389"/>
    </location>
</feature>
<feature type="modified residue" description="N6-(pyridoxal phosphate)lysine" evidence="1">
    <location>
        <position position="235"/>
    </location>
</feature>
<accession>Q9UW18</accession>
<dbReference type="EC" id="5.1.1.1" evidence="2"/>
<dbReference type="EMBL" id="AF169478">
    <property type="protein sequence ID" value="AAD47837.1"/>
    <property type="molecule type" value="Genomic_DNA"/>
</dbReference>
<dbReference type="SMR" id="Q9UW18"/>
<dbReference type="BRENDA" id="5.1.1.1">
    <property type="organism ID" value="1551"/>
</dbReference>
<dbReference type="UniPathway" id="UPA00874"/>
<dbReference type="PHI-base" id="PHI:469"/>
<dbReference type="GO" id="GO:0005829">
    <property type="term" value="C:cytosol"/>
    <property type="evidence" value="ECO:0007669"/>
    <property type="project" value="TreeGrafter"/>
</dbReference>
<dbReference type="GO" id="GO:0008784">
    <property type="term" value="F:alanine racemase activity"/>
    <property type="evidence" value="ECO:0000314"/>
    <property type="project" value="UniProtKB"/>
</dbReference>
<dbReference type="GO" id="GO:0008732">
    <property type="term" value="F:L-allo-threonine aldolase activity"/>
    <property type="evidence" value="ECO:0007669"/>
    <property type="project" value="TreeGrafter"/>
</dbReference>
<dbReference type="GO" id="GO:0006545">
    <property type="term" value="P:glycine biosynthetic process"/>
    <property type="evidence" value="ECO:0007669"/>
    <property type="project" value="TreeGrafter"/>
</dbReference>
<dbReference type="GO" id="GO:0006567">
    <property type="term" value="P:threonine catabolic process"/>
    <property type="evidence" value="ECO:0007669"/>
    <property type="project" value="TreeGrafter"/>
</dbReference>
<dbReference type="GO" id="GO:0009403">
    <property type="term" value="P:toxin biosynthetic process"/>
    <property type="evidence" value="ECO:0000314"/>
    <property type="project" value="UniProtKB"/>
</dbReference>
<dbReference type="CDD" id="cd06502">
    <property type="entry name" value="TA_like"/>
    <property type="match status" value="1"/>
</dbReference>
<dbReference type="FunFam" id="3.40.640.10:FF:000184">
    <property type="entry name" value="Putative threonine aldolase"/>
    <property type="match status" value="1"/>
</dbReference>
<dbReference type="FunFam" id="3.90.1150.10:FF:000089">
    <property type="entry name" value="Threonine aldolase, putative"/>
    <property type="match status" value="1"/>
</dbReference>
<dbReference type="Gene3D" id="3.90.1150.10">
    <property type="entry name" value="Aspartate Aminotransferase, domain 1"/>
    <property type="match status" value="1"/>
</dbReference>
<dbReference type="Gene3D" id="3.40.640.10">
    <property type="entry name" value="Type I PLP-dependent aspartate aminotransferase-like (Major domain)"/>
    <property type="match status" value="1"/>
</dbReference>
<dbReference type="InterPro" id="IPR001597">
    <property type="entry name" value="ArAA_b-elim_lyase/Thr_aldolase"/>
</dbReference>
<dbReference type="InterPro" id="IPR023603">
    <property type="entry name" value="Low_specificity_L-TA-like"/>
</dbReference>
<dbReference type="InterPro" id="IPR015424">
    <property type="entry name" value="PyrdxlP-dep_Trfase"/>
</dbReference>
<dbReference type="InterPro" id="IPR015421">
    <property type="entry name" value="PyrdxlP-dep_Trfase_major"/>
</dbReference>
<dbReference type="InterPro" id="IPR015422">
    <property type="entry name" value="PyrdxlP-dep_Trfase_small"/>
</dbReference>
<dbReference type="PANTHER" id="PTHR48097:SF9">
    <property type="entry name" value="L-THREONINE ALDOLASE"/>
    <property type="match status" value="1"/>
</dbReference>
<dbReference type="PANTHER" id="PTHR48097">
    <property type="entry name" value="L-THREONINE ALDOLASE-RELATED"/>
    <property type="match status" value="1"/>
</dbReference>
<dbReference type="Pfam" id="PF01212">
    <property type="entry name" value="Beta_elim_lyase"/>
    <property type="match status" value="1"/>
</dbReference>
<dbReference type="PIRSF" id="PIRSF017617">
    <property type="entry name" value="Thr_aldolase"/>
    <property type="match status" value="1"/>
</dbReference>
<dbReference type="SUPFAM" id="SSF53383">
    <property type="entry name" value="PLP-dependent transferases"/>
    <property type="match status" value="1"/>
</dbReference>
<sequence>MSNMVLNGNIDKSDRNSILDILQSLENIAWGQPGSARCDFRSDVITRPSLRMLSAVLKTTLGDDVFREDLTTAHFEAHVAEISGREEGMFVITGTMANQLCLHALVSTRPCGILLSSESHAIHYEAGGSSMLSGAMLQPVQPSNGKYLRVEDLEEHAILTDDVHKCPTSIVSMENTAGGAVVPVHELRRIRDWAKQNNVRTHLDGARLFEAVATGAGTLKEYCSLIDLVSVDFSKNLGAPMGAMILGDKKLIQQMRRTRKGIGGGMRQGGVITAAAREALFENFGLGAEIESQTLLQVHKVAKRLGEEWTRKGGKLSKEIETNIIWLDLDAVGIKKSQFIDKGREYGVILDGCRIVCHHQIDIYAVEALIDVFHDILKADPIKNKNSDR</sequence>
<reference key="1">
    <citation type="journal article" date="2000" name="J. Biol. Chem.">
        <title>A eukaryotic alanine racemase gene involved in cyclic peptide biosynthesis.</title>
        <authorList>
            <person name="Cheng Y.-Q."/>
            <person name="Walton J.D."/>
        </authorList>
    </citation>
    <scope>NUCLEOTIDE SEQUENCE [GENOMIC DNA]</scope>
    <scope>FUNCTION</scope>
    <scope>CATALYTIC ACTIVITY</scope>
    <scope>DISRUPTION PHENOTYPE</scope>
    <scope>PATHWAY</scope>
    <source>
        <strain>ATCC 90305 / SB111 / 2R15</strain>
    </source>
</reference>
<reference key="2">
    <citation type="journal article" date="2002" name="Fungal Genet. Biol.">
        <title>An extended physical map of the TOX2 locus of Cochliobolus carbonum required for biosynthesis of HC-toxin.</title>
        <authorList>
            <person name="Ahn J.H."/>
            <person name="Cheng Y.Q."/>
            <person name="Walton J.D."/>
        </authorList>
    </citation>
    <scope>TOX2 CLUSTER ORGANIZATION</scope>
</reference>
<organism>
    <name type="scientific">Cochliobolus carbonum</name>
    <name type="common">Maize leaf spot fungus</name>
    <name type="synonym">Bipolaris zeicola</name>
    <dbReference type="NCBI Taxonomy" id="5017"/>
    <lineage>
        <taxon>Eukaryota</taxon>
        <taxon>Fungi</taxon>
        <taxon>Dikarya</taxon>
        <taxon>Ascomycota</taxon>
        <taxon>Pezizomycotina</taxon>
        <taxon>Dothideomycetes</taxon>
        <taxon>Pleosporomycetidae</taxon>
        <taxon>Pleosporales</taxon>
        <taxon>Pleosporineae</taxon>
        <taxon>Pleosporaceae</taxon>
        <taxon>Bipolaris</taxon>
    </lineage>
</organism>